<gene>
    <name evidence="1" type="primary">rpsD</name>
    <name type="ordered locus">Smlt0930</name>
</gene>
<keyword id="KW-1185">Reference proteome</keyword>
<keyword id="KW-0687">Ribonucleoprotein</keyword>
<keyword id="KW-0689">Ribosomal protein</keyword>
<keyword id="KW-0694">RNA-binding</keyword>
<keyword id="KW-0699">rRNA-binding</keyword>
<comment type="function">
    <text evidence="1">One of the primary rRNA binding proteins, it binds directly to 16S rRNA where it nucleates assembly of the body of the 30S subunit.</text>
</comment>
<comment type="function">
    <text evidence="1">With S5 and S12 plays an important role in translational accuracy.</text>
</comment>
<comment type="subunit">
    <text evidence="1">Part of the 30S ribosomal subunit. Contacts protein S5. The interaction surface between S4 and S5 is involved in control of translational fidelity.</text>
</comment>
<comment type="similarity">
    <text evidence="1">Belongs to the universal ribosomal protein uS4 family.</text>
</comment>
<proteinExistence type="inferred from homology"/>
<organism>
    <name type="scientific">Stenotrophomonas maltophilia (strain K279a)</name>
    <dbReference type="NCBI Taxonomy" id="522373"/>
    <lineage>
        <taxon>Bacteria</taxon>
        <taxon>Pseudomonadati</taxon>
        <taxon>Pseudomonadota</taxon>
        <taxon>Gammaproteobacteria</taxon>
        <taxon>Lysobacterales</taxon>
        <taxon>Lysobacteraceae</taxon>
        <taxon>Stenotrophomonas</taxon>
        <taxon>Stenotrophomonas maltophilia group</taxon>
    </lineage>
</organism>
<protein>
    <recommendedName>
        <fullName evidence="1">Small ribosomal subunit protein uS4</fullName>
    </recommendedName>
    <alternativeName>
        <fullName evidence="2">30S ribosomal protein S4</fullName>
    </alternativeName>
</protein>
<name>RS4_STRMK</name>
<feature type="chain" id="PRO_1000140798" description="Small ribosomal subunit protein uS4">
    <location>
        <begin position="1"/>
        <end position="209"/>
    </location>
</feature>
<feature type="domain" description="S4 RNA-binding" evidence="1">
    <location>
        <begin position="98"/>
        <end position="161"/>
    </location>
</feature>
<accession>B2FQK7</accession>
<dbReference type="EMBL" id="AM743169">
    <property type="protein sequence ID" value="CAQ44498.1"/>
    <property type="molecule type" value="Genomic_DNA"/>
</dbReference>
<dbReference type="RefSeq" id="WP_004145446.1">
    <property type="nucleotide sequence ID" value="NC_010943.1"/>
</dbReference>
<dbReference type="SMR" id="B2FQK7"/>
<dbReference type="EnsemblBacteria" id="CAQ44498">
    <property type="protein sequence ID" value="CAQ44498"/>
    <property type="gene ID" value="Smlt0930"/>
</dbReference>
<dbReference type="GeneID" id="97259957"/>
<dbReference type="KEGG" id="sml:Smlt0930"/>
<dbReference type="eggNOG" id="COG0522">
    <property type="taxonomic scope" value="Bacteria"/>
</dbReference>
<dbReference type="HOGENOM" id="CLU_092403_0_2_6"/>
<dbReference type="Proteomes" id="UP000008840">
    <property type="component" value="Chromosome"/>
</dbReference>
<dbReference type="GO" id="GO:0015935">
    <property type="term" value="C:small ribosomal subunit"/>
    <property type="evidence" value="ECO:0007669"/>
    <property type="project" value="InterPro"/>
</dbReference>
<dbReference type="GO" id="GO:0019843">
    <property type="term" value="F:rRNA binding"/>
    <property type="evidence" value="ECO:0007669"/>
    <property type="project" value="UniProtKB-UniRule"/>
</dbReference>
<dbReference type="GO" id="GO:0003735">
    <property type="term" value="F:structural constituent of ribosome"/>
    <property type="evidence" value="ECO:0007669"/>
    <property type="project" value="InterPro"/>
</dbReference>
<dbReference type="GO" id="GO:0042274">
    <property type="term" value="P:ribosomal small subunit biogenesis"/>
    <property type="evidence" value="ECO:0007669"/>
    <property type="project" value="TreeGrafter"/>
</dbReference>
<dbReference type="GO" id="GO:0006412">
    <property type="term" value="P:translation"/>
    <property type="evidence" value="ECO:0007669"/>
    <property type="project" value="UniProtKB-UniRule"/>
</dbReference>
<dbReference type="CDD" id="cd00165">
    <property type="entry name" value="S4"/>
    <property type="match status" value="1"/>
</dbReference>
<dbReference type="FunFam" id="1.10.1050.10:FF:000001">
    <property type="entry name" value="30S ribosomal protein S4"/>
    <property type="match status" value="1"/>
</dbReference>
<dbReference type="FunFam" id="3.10.290.10:FF:000001">
    <property type="entry name" value="30S ribosomal protein S4"/>
    <property type="match status" value="1"/>
</dbReference>
<dbReference type="Gene3D" id="1.10.1050.10">
    <property type="entry name" value="Ribosomal Protein S4 Delta 41, Chain A, domain 1"/>
    <property type="match status" value="1"/>
</dbReference>
<dbReference type="Gene3D" id="3.10.290.10">
    <property type="entry name" value="RNA-binding S4 domain"/>
    <property type="match status" value="1"/>
</dbReference>
<dbReference type="HAMAP" id="MF_01306_B">
    <property type="entry name" value="Ribosomal_uS4_B"/>
    <property type="match status" value="1"/>
</dbReference>
<dbReference type="InterPro" id="IPR022801">
    <property type="entry name" value="Ribosomal_uS4"/>
</dbReference>
<dbReference type="InterPro" id="IPR005709">
    <property type="entry name" value="Ribosomal_uS4_bac-type"/>
</dbReference>
<dbReference type="InterPro" id="IPR018079">
    <property type="entry name" value="Ribosomal_uS4_CS"/>
</dbReference>
<dbReference type="InterPro" id="IPR001912">
    <property type="entry name" value="Ribosomal_uS4_N"/>
</dbReference>
<dbReference type="InterPro" id="IPR002942">
    <property type="entry name" value="S4_RNA-bd"/>
</dbReference>
<dbReference type="InterPro" id="IPR036986">
    <property type="entry name" value="S4_RNA-bd_sf"/>
</dbReference>
<dbReference type="NCBIfam" id="NF003717">
    <property type="entry name" value="PRK05327.1"/>
    <property type="match status" value="1"/>
</dbReference>
<dbReference type="NCBIfam" id="TIGR01017">
    <property type="entry name" value="rpsD_bact"/>
    <property type="match status" value="1"/>
</dbReference>
<dbReference type="PANTHER" id="PTHR11831">
    <property type="entry name" value="30S 40S RIBOSOMAL PROTEIN"/>
    <property type="match status" value="1"/>
</dbReference>
<dbReference type="PANTHER" id="PTHR11831:SF4">
    <property type="entry name" value="SMALL RIBOSOMAL SUBUNIT PROTEIN US4M"/>
    <property type="match status" value="1"/>
</dbReference>
<dbReference type="Pfam" id="PF00163">
    <property type="entry name" value="Ribosomal_S4"/>
    <property type="match status" value="1"/>
</dbReference>
<dbReference type="Pfam" id="PF01479">
    <property type="entry name" value="S4"/>
    <property type="match status" value="1"/>
</dbReference>
<dbReference type="SMART" id="SM01390">
    <property type="entry name" value="Ribosomal_S4"/>
    <property type="match status" value="1"/>
</dbReference>
<dbReference type="SMART" id="SM00363">
    <property type="entry name" value="S4"/>
    <property type="match status" value="1"/>
</dbReference>
<dbReference type="SUPFAM" id="SSF55174">
    <property type="entry name" value="Alpha-L RNA-binding motif"/>
    <property type="match status" value="1"/>
</dbReference>
<dbReference type="PROSITE" id="PS00632">
    <property type="entry name" value="RIBOSOMAL_S4"/>
    <property type="match status" value="1"/>
</dbReference>
<dbReference type="PROSITE" id="PS50889">
    <property type="entry name" value="S4"/>
    <property type="match status" value="1"/>
</dbReference>
<sequence>MARYIGPTCKLARREGADLSLKSPARALDSKCKLEQKPGQHGATARKGKLSDYATQLREKQKVKRIYGLLERQFRNYYKKASTKKGNTGENLLQLLETRLDNVVYRMGFAVTRPAARQLVSHRGVTVNGKSVNLASYQVKAGDAIALSEKAAKQLRVQEALTVAAQHDLSPSWVEVDSGKFTGIFKAVPDRSDLPADINEALIVELYSK</sequence>
<evidence type="ECO:0000255" key="1">
    <source>
        <dbReference type="HAMAP-Rule" id="MF_01306"/>
    </source>
</evidence>
<evidence type="ECO:0000305" key="2"/>
<reference key="1">
    <citation type="journal article" date="2008" name="Genome Biol.">
        <title>The complete genome, comparative and functional analysis of Stenotrophomonas maltophilia reveals an organism heavily shielded by drug resistance determinants.</title>
        <authorList>
            <person name="Crossman L.C."/>
            <person name="Gould V.C."/>
            <person name="Dow J.M."/>
            <person name="Vernikos G.S."/>
            <person name="Okazaki A."/>
            <person name="Sebaihia M."/>
            <person name="Saunders D."/>
            <person name="Arrowsmith C."/>
            <person name="Carver T."/>
            <person name="Peters N."/>
            <person name="Adlem E."/>
            <person name="Kerhornou A."/>
            <person name="Lord A."/>
            <person name="Murphy L."/>
            <person name="Seeger K."/>
            <person name="Squares R."/>
            <person name="Rutter S."/>
            <person name="Quail M.A."/>
            <person name="Rajandream M.A."/>
            <person name="Harris D."/>
            <person name="Churcher C."/>
            <person name="Bentley S.D."/>
            <person name="Parkhill J."/>
            <person name="Thomson N.R."/>
            <person name="Avison M.B."/>
        </authorList>
    </citation>
    <scope>NUCLEOTIDE SEQUENCE [LARGE SCALE GENOMIC DNA]</scope>
    <source>
        <strain>K279a</strain>
    </source>
</reference>